<accession>B1Y0M2</accession>
<comment type="function">
    <text evidence="1">Promotes RNA polymerase assembly. Latches the N- and C-terminal regions of the beta' subunit thereby facilitating its interaction with the beta and alpha subunits.</text>
</comment>
<comment type="catalytic activity">
    <reaction evidence="1">
        <text>RNA(n) + a ribonucleoside 5'-triphosphate = RNA(n+1) + diphosphate</text>
        <dbReference type="Rhea" id="RHEA:21248"/>
        <dbReference type="Rhea" id="RHEA-COMP:14527"/>
        <dbReference type="Rhea" id="RHEA-COMP:17342"/>
        <dbReference type="ChEBI" id="CHEBI:33019"/>
        <dbReference type="ChEBI" id="CHEBI:61557"/>
        <dbReference type="ChEBI" id="CHEBI:140395"/>
        <dbReference type="EC" id="2.7.7.6"/>
    </reaction>
</comment>
<comment type="subunit">
    <text evidence="1">The RNAP catalytic core consists of 2 alpha, 1 beta, 1 beta' and 1 omega subunit. When a sigma factor is associated with the core the holoenzyme is formed, which can initiate transcription.</text>
</comment>
<comment type="similarity">
    <text evidence="1">Belongs to the RNA polymerase subunit omega family.</text>
</comment>
<name>RPOZ_LEPCP</name>
<reference key="1">
    <citation type="submission" date="2008-03" db="EMBL/GenBank/DDBJ databases">
        <title>Complete sequence of Leptothrix cholodnii SP-6.</title>
        <authorList>
            <consortium name="US DOE Joint Genome Institute"/>
            <person name="Copeland A."/>
            <person name="Lucas S."/>
            <person name="Lapidus A."/>
            <person name="Glavina del Rio T."/>
            <person name="Dalin E."/>
            <person name="Tice H."/>
            <person name="Bruce D."/>
            <person name="Goodwin L."/>
            <person name="Pitluck S."/>
            <person name="Chertkov O."/>
            <person name="Brettin T."/>
            <person name="Detter J.C."/>
            <person name="Han C."/>
            <person name="Kuske C.R."/>
            <person name="Schmutz J."/>
            <person name="Larimer F."/>
            <person name="Land M."/>
            <person name="Hauser L."/>
            <person name="Kyrpides N."/>
            <person name="Lykidis A."/>
            <person name="Emerson D."/>
            <person name="Richardson P."/>
        </authorList>
    </citation>
    <scope>NUCLEOTIDE SEQUENCE [LARGE SCALE GENOMIC DNA]</scope>
    <source>
        <strain>ATCC 51168 / LMG 8142 / SP-6</strain>
    </source>
</reference>
<proteinExistence type="inferred from homology"/>
<feature type="chain" id="PRO_1000121242" description="DNA-directed RNA polymerase subunit omega">
    <location>
        <begin position="1"/>
        <end position="67"/>
    </location>
</feature>
<evidence type="ECO:0000255" key="1">
    <source>
        <dbReference type="HAMAP-Rule" id="MF_00366"/>
    </source>
</evidence>
<organism>
    <name type="scientific">Leptothrix cholodnii (strain ATCC 51168 / LMG 8142 / SP-6)</name>
    <name type="common">Leptothrix discophora (strain SP-6)</name>
    <dbReference type="NCBI Taxonomy" id="395495"/>
    <lineage>
        <taxon>Bacteria</taxon>
        <taxon>Pseudomonadati</taxon>
        <taxon>Pseudomonadota</taxon>
        <taxon>Betaproteobacteria</taxon>
        <taxon>Burkholderiales</taxon>
        <taxon>Sphaerotilaceae</taxon>
        <taxon>Leptothrix</taxon>
    </lineage>
</organism>
<gene>
    <name evidence="1" type="primary">rpoZ</name>
    <name type="ordered locus">Lcho_0730</name>
</gene>
<sequence>MARITVEDCLQKIPNRFQLVLAATYRARMLSQGHAPKVETKNKPGVTALREIAAGAVGIEMLRKVPG</sequence>
<keyword id="KW-0240">DNA-directed RNA polymerase</keyword>
<keyword id="KW-0548">Nucleotidyltransferase</keyword>
<keyword id="KW-1185">Reference proteome</keyword>
<keyword id="KW-0804">Transcription</keyword>
<keyword id="KW-0808">Transferase</keyword>
<dbReference type="EC" id="2.7.7.6" evidence="1"/>
<dbReference type="EMBL" id="CP001013">
    <property type="protein sequence ID" value="ACB33003.1"/>
    <property type="molecule type" value="Genomic_DNA"/>
</dbReference>
<dbReference type="RefSeq" id="WP_012345765.1">
    <property type="nucleotide sequence ID" value="NC_010524.1"/>
</dbReference>
<dbReference type="SMR" id="B1Y0M2"/>
<dbReference type="STRING" id="395495.Lcho_0730"/>
<dbReference type="KEGG" id="lch:Lcho_0730"/>
<dbReference type="eggNOG" id="COG1758">
    <property type="taxonomic scope" value="Bacteria"/>
</dbReference>
<dbReference type="HOGENOM" id="CLU_125406_5_1_4"/>
<dbReference type="OrthoDB" id="9796300at2"/>
<dbReference type="Proteomes" id="UP000001693">
    <property type="component" value="Chromosome"/>
</dbReference>
<dbReference type="GO" id="GO:0000428">
    <property type="term" value="C:DNA-directed RNA polymerase complex"/>
    <property type="evidence" value="ECO:0007669"/>
    <property type="project" value="UniProtKB-KW"/>
</dbReference>
<dbReference type="GO" id="GO:0003677">
    <property type="term" value="F:DNA binding"/>
    <property type="evidence" value="ECO:0007669"/>
    <property type="project" value="UniProtKB-UniRule"/>
</dbReference>
<dbReference type="GO" id="GO:0003899">
    <property type="term" value="F:DNA-directed RNA polymerase activity"/>
    <property type="evidence" value="ECO:0007669"/>
    <property type="project" value="UniProtKB-UniRule"/>
</dbReference>
<dbReference type="GO" id="GO:0006351">
    <property type="term" value="P:DNA-templated transcription"/>
    <property type="evidence" value="ECO:0007669"/>
    <property type="project" value="UniProtKB-UniRule"/>
</dbReference>
<dbReference type="Gene3D" id="3.90.940.10">
    <property type="match status" value="1"/>
</dbReference>
<dbReference type="HAMAP" id="MF_00366">
    <property type="entry name" value="RNApol_bact_RpoZ"/>
    <property type="match status" value="1"/>
</dbReference>
<dbReference type="InterPro" id="IPR003716">
    <property type="entry name" value="DNA-dir_RNA_pol_omega"/>
</dbReference>
<dbReference type="InterPro" id="IPR006110">
    <property type="entry name" value="Pol_omega/Rpo6/RPB6"/>
</dbReference>
<dbReference type="InterPro" id="IPR036161">
    <property type="entry name" value="RPB6/omega-like_sf"/>
</dbReference>
<dbReference type="NCBIfam" id="TIGR00690">
    <property type="entry name" value="rpoZ"/>
    <property type="match status" value="1"/>
</dbReference>
<dbReference type="PANTHER" id="PTHR34476">
    <property type="entry name" value="DNA-DIRECTED RNA POLYMERASE SUBUNIT OMEGA"/>
    <property type="match status" value="1"/>
</dbReference>
<dbReference type="PANTHER" id="PTHR34476:SF1">
    <property type="entry name" value="DNA-DIRECTED RNA POLYMERASE SUBUNIT OMEGA"/>
    <property type="match status" value="1"/>
</dbReference>
<dbReference type="Pfam" id="PF01192">
    <property type="entry name" value="RNA_pol_Rpb6"/>
    <property type="match status" value="1"/>
</dbReference>
<dbReference type="SMART" id="SM01409">
    <property type="entry name" value="RNA_pol_Rpb6"/>
    <property type="match status" value="1"/>
</dbReference>
<dbReference type="SUPFAM" id="SSF63562">
    <property type="entry name" value="RPB6/omega subunit-like"/>
    <property type="match status" value="1"/>
</dbReference>
<protein>
    <recommendedName>
        <fullName evidence="1">DNA-directed RNA polymerase subunit omega</fullName>
        <shortName evidence="1">RNAP omega subunit</shortName>
        <ecNumber evidence="1">2.7.7.6</ecNumber>
    </recommendedName>
    <alternativeName>
        <fullName evidence="1">RNA polymerase omega subunit</fullName>
    </alternativeName>
    <alternativeName>
        <fullName evidence="1">Transcriptase subunit omega</fullName>
    </alternativeName>
</protein>